<keyword id="KW-0186">Copper</keyword>
<keyword id="KW-0903">Direct protein sequencing</keyword>
<keyword id="KW-0479">Metal-binding</keyword>
<keyword id="KW-0574">Periplasm</keyword>
<keyword id="KW-0614">Plasmid</keyword>
<keyword id="KW-0732">Signal</keyword>
<organism>
    <name type="scientific">Escherichia coli</name>
    <dbReference type="NCBI Taxonomy" id="562"/>
    <lineage>
        <taxon>Bacteria</taxon>
        <taxon>Pseudomonadati</taxon>
        <taxon>Pseudomonadota</taxon>
        <taxon>Gammaproteobacteria</taxon>
        <taxon>Enterobacterales</taxon>
        <taxon>Enterobacteriaceae</taxon>
        <taxon>Escherichia</taxon>
    </lineage>
</organism>
<reference key="1">
    <citation type="journal article" date="1995" name="Mol. Microbiol.">
        <title>Molecular genetics and transport analysis of the copper-resistance determinant (pco) from Escherichia coli plasmid pRJ1004.</title>
        <authorList>
            <person name="Brown N.L."/>
            <person name="Barrett S.R."/>
            <person name="Camakaris J."/>
            <person name="Lee B.T.O."/>
            <person name="Rouch D.A."/>
        </authorList>
    </citation>
    <scope>NUCLEOTIDE SEQUENCE [GENOMIC DNA]</scope>
</reference>
<reference key="2">
    <citation type="journal article" date="1999" name="Nat. Med.">
        <title>Molecular basis for resistance to silver cations in Salmonella.</title>
        <authorList>
            <person name="Gupta A."/>
            <person name="Matsui K."/>
            <person name="Lo J.-F."/>
            <person name="Silver S."/>
        </authorList>
    </citation>
    <scope>PROTEIN SEQUENCE OF 21-24</scope>
</reference>
<name>PCOE_ECOLX</name>
<dbReference type="EMBL" id="X83541">
    <property type="protein sequence ID" value="CAA58532.1"/>
    <property type="molecule type" value="Genomic_DNA"/>
</dbReference>
<dbReference type="PIR" id="S70162">
    <property type="entry name" value="S52259"/>
</dbReference>
<dbReference type="RefSeq" id="WP_058799199.1">
    <property type="nucleotide sequence ID" value="NZ_VDHN01000034.1"/>
</dbReference>
<dbReference type="GO" id="GO:0042597">
    <property type="term" value="C:periplasmic space"/>
    <property type="evidence" value="ECO:0007669"/>
    <property type="project" value="UniProtKB-SubCell"/>
</dbReference>
<dbReference type="GO" id="GO:0046872">
    <property type="term" value="F:metal ion binding"/>
    <property type="evidence" value="ECO:0007669"/>
    <property type="project" value="UniProtKB-KW"/>
</dbReference>
<gene>
    <name type="primary">pcoE</name>
</gene>
<accession>Q47459</accession>
<protein>
    <recommendedName>
        <fullName>Probable copper-binding protein PcoE</fullName>
    </recommendedName>
</protein>
<sequence>MKKILVSFVAIMAVASSAMAAETMNMHDQVNNAQAPAHQMQSSAEKSAVQGDSMTMMDMSSHDQAAMSHDMMQNGNSAAHQDMAEMHKKMMKSKPAASNETAKSFSEMNEHEKSAVVHEKANNGQSSVIHQQQAEKHRSQITQN</sequence>
<proteinExistence type="evidence at protein level"/>
<feature type="signal peptide" evidence="2">
    <location>
        <begin position="1"/>
        <end position="20"/>
    </location>
</feature>
<feature type="chain" id="PRO_0000022022" description="Probable copper-binding protein PcoE">
    <location>
        <begin position="21"/>
        <end position="144"/>
    </location>
</feature>
<feature type="region of interest" description="Disordered" evidence="1">
    <location>
        <begin position="86"/>
        <end position="144"/>
    </location>
</feature>
<feature type="compositionally biased region" description="Polar residues" evidence="1">
    <location>
        <begin position="96"/>
        <end position="107"/>
    </location>
</feature>
<feature type="compositionally biased region" description="Basic and acidic residues" evidence="1">
    <location>
        <begin position="108"/>
        <end position="121"/>
    </location>
</feature>
<feature type="compositionally biased region" description="Polar residues" evidence="1">
    <location>
        <begin position="122"/>
        <end position="132"/>
    </location>
</feature>
<geneLocation type="plasmid">
    <name>pRJ1004</name>
</geneLocation>
<evidence type="ECO:0000256" key="1">
    <source>
        <dbReference type="SAM" id="MobiDB-lite"/>
    </source>
</evidence>
<evidence type="ECO:0000269" key="2">
    <source>
    </source>
</evidence>
<evidence type="ECO:0000305" key="3"/>
<comment type="function">
    <text>Required for the copper-inducible expression of copper resistance. Activated by the two-component regulatory system CusS/CusR.</text>
</comment>
<comment type="subcellular location">
    <subcellularLocation>
        <location>Periplasm</location>
    </subcellularLocation>
</comment>
<comment type="induction">
    <text>By copper.</text>
</comment>
<comment type="similarity">
    <text evidence="3">To S.typhimurium SilE.</text>
</comment>